<evidence type="ECO:0000255" key="1">
    <source>
        <dbReference type="HAMAP-Rule" id="MF_00321"/>
    </source>
</evidence>
<comment type="function">
    <text evidence="1">Necessary for normal cell division and for the maintenance of normal septation.</text>
</comment>
<comment type="cofactor">
    <cofactor evidence="1">
        <name>Mg(2+)</name>
        <dbReference type="ChEBI" id="CHEBI:18420"/>
    </cofactor>
</comment>
<comment type="similarity">
    <text evidence="1">Belongs to the TRAFAC class TrmE-Era-EngA-EngB-Septin-like GTPase superfamily. EngB GTPase family.</text>
</comment>
<gene>
    <name evidence="1" type="primary">engB</name>
    <name type="ordered locus">BPUM_2460</name>
</gene>
<reference key="1">
    <citation type="journal article" date="2007" name="PLoS ONE">
        <title>Paradoxical DNA repair and peroxide resistance gene conservation in Bacillus pumilus SAFR-032.</title>
        <authorList>
            <person name="Gioia J."/>
            <person name="Yerrapragada S."/>
            <person name="Qin X."/>
            <person name="Jiang H."/>
            <person name="Igboeli O.C."/>
            <person name="Muzny D."/>
            <person name="Dugan-Rocha S."/>
            <person name="Ding Y."/>
            <person name="Hawes A."/>
            <person name="Liu W."/>
            <person name="Perez L."/>
            <person name="Kovar C."/>
            <person name="Dinh H."/>
            <person name="Lee S."/>
            <person name="Nazareth L."/>
            <person name="Blyth P."/>
            <person name="Holder M."/>
            <person name="Buhay C."/>
            <person name="Tirumalai M.R."/>
            <person name="Liu Y."/>
            <person name="Dasgupta I."/>
            <person name="Bokhetache L."/>
            <person name="Fujita M."/>
            <person name="Karouia F."/>
            <person name="Eswara Moorthy P."/>
            <person name="Siefert J."/>
            <person name="Uzman A."/>
            <person name="Buzumbo P."/>
            <person name="Verma A."/>
            <person name="Zwiya H."/>
            <person name="McWilliams B.D."/>
            <person name="Olowu A."/>
            <person name="Clinkenbeard K.D."/>
            <person name="Newcombe D."/>
            <person name="Golebiewski L."/>
            <person name="Petrosino J.F."/>
            <person name="Nicholson W.L."/>
            <person name="Fox G.E."/>
            <person name="Venkateswaran K."/>
            <person name="Highlander S.K."/>
            <person name="Weinstock G.M."/>
        </authorList>
    </citation>
    <scope>NUCLEOTIDE SEQUENCE [LARGE SCALE GENOMIC DNA]</scope>
    <source>
        <strain>SAFR-032</strain>
    </source>
</reference>
<accession>A8FFV6</accession>
<dbReference type="EMBL" id="CP000813">
    <property type="protein sequence ID" value="ABV63123.1"/>
    <property type="molecule type" value="Genomic_DNA"/>
</dbReference>
<dbReference type="SMR" id="A8FFV6"/>
<dbReference type="STRING" id="315750.BPUM_2460"/>
<dbReference type="GeneID" id="5621724"/>
<dbReference type="KEGG" id="bpu:BPUM_2460"/>
<dbReference type="eggNOG" id="COG0218">
    <property type="taxonomic scope" value="Bacteria"/>
</dbReference>
<dbReference type="HOGENOM" id="CLU_033732_3_0_9"/>
<dbReference type="OrthoDB" id="9804921at2"/>
<dbReference type="Proteomes" id="UP000001355">
    <property type="component" value="Chromosome"/>
</dbReference>
<dbReference type="GO" id="GO:0005829">
    <property type="term" value="C:cytosol"/>
    <property type="evidence" value="ECO:0007669"/>
    <property type="project" value="TreeGrafter"/>
</dbReference>
<dbReference type="GO" id="GO:0005525">
    <property type="term" value="F:GTP binding"/>
    <property type="evidence" value="ECO:0007669"/>
    <property type="project" value="UniProtKB-UniRule"/>
</dbReference>
<dbReference type="GO" id="GO:0046872">
    <property type="term" value="F:metal ion binding"/>
    <property type="evidence" value="ECO:0007669"/>
    <property type="project" value="UniProtKB-KW"/>
</dbReference>
<dbReference type="GO" id="GO:0000917">
    <property type="term" value="P:division septum assembly"/>
    <property type="evidence" value="ECO:0007669"/>
    <property type="project" value="UniProtKB-KW"/>
</dbReference>
<dbReference type="CDD" id="cd01876">
    <property type="entry name" value="YihA_EngB"/>
    <property type="match status" value="1"/>
</dbReference>
<dbReference type="FunFam" id="3.40.50.300:FF:000098">
    <property type="entry name" value="Probable GTP-binding protein EngB"/>
    <property type="match status" value="1"/>
</dbReference>
<dbReference type="Gene3D" id="3.40.50.300">
    <property type="entry name" value="P-loop containing nucleotide triphosphate hydrolases"/>
    <property type="match status" value="1"/>
</dbReference>
<dbReference type="HAMAP" id="MF_00321">
    <property type="entry name" value="GTPase_EngB"/>
    <property type="match status" value="1"/>
</dbReference>
<dbReference type="InterPro" id="IPR030393">
    <property type="entry name" value="G_ENGB_dom"/>
</dbReference>
<dbReference type="InterPro" id="IPR006073">
    <property type="entry name" value="GTP-bd"/>
</dbReference>
<dbReference type="InterPro" id="IPR019987">
    <property type="entry name" value="GTP-bd_ribosome_bio_YsxC"/>
</dbReference>
<dbReference type="InterPro" id="IPR027417">
    <property type="entry name" value="P-loop_NTPase"/>
</dbReference>
<dbReference type="NCBIfam" id="TIGR03598">
    <property type="entry name" value="GTPase_YsxC"/>
    <property type="match status" value="1"/>
</dbReference>
<dbReference type="PANTHER" id="PTHR11649:SF13">
    <property type="entry name" value="ENGB-TYPE G DOMAIN-CONTAINING PROTEIN"/>
    <property type="match status" value="1"/>
</dbReference>
<dbReference type="PANTHER" id="PTHR11649">
    <property type="entry name" value="MSS1/TRME-RELATED GTP-BINDING PROTEIN"/>
    <property type="match status" value="1"/>
</dbReference>
<dbReference type="Pfam" id="PF01926">
    <property type="entry name" value="MMR_HSR1"/>
    <property type="match status" value="1"/>
</dbReference>
<dbReference type="SUPFAM" id="SSF52540">
    <property type="entry name" value="P-loop containing nucleoside triphosphate hydrolases"/>
    <property type="match status" value="1"/>
</dbReference>
<dbReference type="PROSITE" id="PS51706">
    <property type="entry name" value="G_ENGB"/>
    <property type="match status" value="1"/>
</dbReference>
<proteinExistence type="inferred from homology"/>
<protein>
    <recommendedName>
        <fullName evidence="1">Probable GTP-binding protein EngB</fullName>
    </recommendedName>
</protein>
<name>ENGB_BACP2</name>
<organism>
    <name type="scientific">Bacillus pumilus (strain SAFR-032)</name>
    <dbReference type="NCBI Taxonomy" id="315750"/>
    <lineage>
        <taxon>Bacteria</taxon>
        <taxon>Bacillati</taxon>
        <taxon>Bacillota</taxon>
        <taxon>Bacilli</taxon>
        <taxon>Bacillales</taxon>
        <taxon>Bacillaceae</taxon>
        <taxon>Bacillus</taxon>
    </lineage>
</organism>
<sequence>MKVTKSDIVISAVKPEQYPSGGLPEIALAGRSNVGKSSFINSLINRKNLARTSSKPGKTQTLNFYIINDMLHFVDVPGYGFAKVSKTEREAWGRMIETYITMREELKAVVQIVDLRHKPSVDDVNMYEFLKYYGVPVIVIATKADKIPKGKWEKHAKVVKQTLDIAPSDELVLFSSETKKGKDEAWNAILAKINK</sequence>
<keyword id="KW-0131">Cell cycle</keyword>
<keyword id="KW-0132">Cell division</keyword>
<keyword id="KW-0342">GTP-binding</keyword>
<keyword id="KW-0460">Magnesium</keyword>
<keyword id="KW-0479">Metal-binding</keyword>
<keyword id="KW-0547">Nucleotide-binding</keyword>
<keyword id="KW-0717">Septation</keyword>
<feature type="chain" id="PRO_1000059469" description="Probable GTP-binding protein EngB">
    <location>
        <begin position="1"/>
        <end position="195"/>
    </location>
</feature>
<feature type="domain" description="EngB-type G" evidence="1">
    <location>
        <begin position="22"/>
        <end position="195"/>
    </location>
</feature>
<feature type="binding site" evidence="1">
    <location>
        <begin position="30"/>
        <end position="37"/>
    </location>
    <ligand>
        <name>GTP</name>
        <dbReference type="ChEBI" id="CHEBI:37565"/>
    </ligand>
</feature>
<feature type="binding site" evidence="1">
    <location>
        <position position="37"/>
    </location>
    <ligand>
        <name>Mg(2+)</name>
        <dbReference type="ChEBI" id="CHEBI:18420"/>
    </ligand>
</feature>
<feature type="binding site" evidence="1">
    <location>
        <begin position="57"/>
        <end position="61"/>
    </location>
    <ligand>
        <name>GTP</name>
        <dbReference type="ChEBI" id="CHEBI:37565"/>
    </ligand>
</feature>
<feature type="binding site" evidence="1">
    <location>
        <position position="59"/>
    </location>
    <ligand>
        <name>Mg(2+)</name>
        <dbReference type="ChEBI" id="CHEBI:18420"/>
    </ligand>
</feature>
<feature type="binding site" evidence="1">
    <location>
        <begin position="75"/>
        <end position="78"/>
    </location>
    <ligand>
        <name>GTP</name>
        <dbReference type="ChEBI" id="CHEBI:37565"/>
    </ligand>
</feature>
<feature type="binding site" evidence="1">
    <location>
        <begin position="142"/>
        <end position="145"/>
    </location>
    <ligand>
        <name>GTP</name>
        <dbReference type="ChEBI" id="CHEBI:37565"/>
    </ligand>
</feature>
<feature type="binding site" evidence="1">
    <location>
        <begin position="174"/>
        <end position="176"/>
    </location>
    <ligand>
        <name>GTP</name>
        <dbReference type="ChEBI" id="CHEBI:37565"/>
    </ligand>
</feature>